<keyword id="KW-0878">Amphibian defense peptide</keyword>
<keyword id="KW-0903">Direct protein sequencing</keyword>
<keyword id="KW-1213">G-protein coupled receptor impairing toxin</keyword>
<keyword id="KW-0964">Secreted</keyword>
<keyword id="KW-0800">Toxin</keyword>
<keyword id="KW-0838">Vasoactive</keyword>
<keyword id="KW-0840">Vasodilator</keyword>
<sequence>APPGFTPFRID</sequence>
<name>BRK7_PHYSG</name>
<proteinExistence type="evidence at protein level"/>
<reference evidence="4" key="1">
    <citation type="submission" date="2010-09" db="UniProtKB">
        <title>Bradykinin-related peptides in skin secretion of Physalaemus signifer (Girard, 1853) (Anura, Leiuperidae).</title>
        <authorList>
            <person name="Rates B."/>
            <person name="Ireno I.C."/>
            <person name="Canelas M.A."/>
            <person name="de Lima M.E."/>
            <person name="Pimenta A.M.C."/>
        </authorList>
    </citation>
    <scope>PROTEIN SEQUENCE</scope>
    <scope>SUBCELLULAR LOCATION</scope>
    <scope>TISSUE SPECIFICITY</scope>
    <source>
        <tissue evidence="2">Skin secretion</tissue>
    </source>
</reference>
<protein>
    <recommendedName>
        <fullName evidence="3">[Ala1,Thr6,Asp11]-phyllokinin</fullName>
    </recommendedName>
</protein>
<organism>
    <name type="scientific">Physalaemus signifer</name>
    <name type="common">Girard's dwarf frog</name>
    <dbReference type="NCBI Taxonomy" id="364768"/>
    <lineage>
        <taxon>Eukaryota</taxon>
        <taxon>Metazoa</taxon>
        <taxon>Chordata</taxon>
        <taxon>Craniata</taxon>
        <taxon>Vertebrata</taxon>
        <taxon>Euteleostomi</taxon>
        <taxon>Amphibia</taxon>
        <taxon>Batrachia</taxon>
        <taxon>Anura</taxon>
        <taxon>Neobatrachia</taxon>
        <taxon>Hyloidea</taxon>
        <taxon>Leptodactylidae</taxon>
        <taxon>Leiuperinae</taxon>
        <taxon>Physalaemus</taxon>
    </lineage>
</organism>
<dbReference type="GO" id="GO:0005576">
    <property type="term" value="C:extracellular region"/>
    <property type="evidence" value="ECO:0007669"/>
    <property type="project" value="UniProtKB-SubCell"/>
</dbReference>
<dbReference type="GO" id="GO:0090729">
    <property type="term" value="F:toxin activity"/>
    <property type="evidence" value="ECO:0007669"/>
    <property type="project" value="UniProtKB-KW"/>
</dbReference>
<dbReference type="GO" id="GO:0006952">
    <property type="term" value="P:defense response"/>
    <property type="evidence" value="ECO:0007669"/>
    <property type="project" value="UniProtKB-KW"/>
</dbReference>
<dbReference type="GO" id="GO:0042311">
    <property type="term" value="P:vasodilation"/>
    <property type="evidence" value="ECO:0007669"/>
    <property type="project" value="UniProtKB-KW"/>
</dbReference>
<feature type="peptide" id="PRO_0000404692" description="[Ala1,Thr6,Asp11]-phyllokinin" evidence="2">
    <location>
        <begin position="1"/>
        <end position="11"/>
    </location>
</feature>
<comment type="function">
    <text evidence="1">Produces in vitro relaxation of rat arterial smooth muscle and constriction of intestinal smooth muscle (By similarity). May target bradykinin receptors (BDKRB).</text>
</comment>
<comment type="subcellular location">
    <subcellularLocation>
        <location evidence="2">Secreted</location>
    </subcellularLocation>
</comment>
<comment type="tissue specificity">
    <text evidence="2">Expressed by the skin glands.</text>
</comment>
<comment type="similarity">
    <text evidence="4">Belongs to the bradykinin-related peptide family.</text>
</comment>
<accession>P86817</accession>
<evidence type="ECO:0000250" key="1"/>
<evidence type="ECO:0000269" key="2">
    <source ref="1"/>
</evidence>
<evidence type="ECO:0000303" key="3">
    <source ref="1"/>
</evidence>
<evidence type="ECO:0000305" key="4"/>